<reference key="1">
    <citation type="journal article" date="2017" name="Sci. Rep.">
        <title>Two T7-like Bacteriophages, K5-2 and K5-4, Each Encodes Two Capsule Depolymerases: Isolation and Functional Characterization.</title>
        <authorList>
            <person name="Hsieh P.F."/>
            <person name="Lin H.H."/>
            <person name="Lin T.L."/>
            <person name="Chen Y.Y."/>
            <person name="Wang J.T."/>
        </authorList>
    </citation>
    <scope>NUCLEOTIDE SEQUENCE [LARGE SCALE GENOMIC DNA]</scope>
    <scope>FUNCTION</scope>
</reference>
<reference key="2">
    <citation type="journal article" date="2019" name="Front. Microbiol.">
        <title>Modeling the Architecture of Depolymerase-Containing Receptor Binding Proteins in Klebsiella Phages.</title>
        <authorList>
            <person name="Latka A."/>
            <person name="Leiman P.G."/>
            <person name="Drulis-Kawa Z."/>
            <person name="Briers Y."/>
        </authorList>
    </citation>
    <scope>REVIEW</scope>
</reference>
<proteinExistence type="inferred from homology"/>
<feature type="chain" id="PRO_0000458714" description="Depolymerase 2, capsule K5-specific">
    <location>
        <begin position="1"/>
        <end position="685"/>
    </location>
</feature>
<sequence>MIKNDFNQPKGSTIGVLKDGRTIQEAFDSLGYLGVAVLSPANYGAKGDGKADDTIPLRQCVQDACALGGRVVGTVGAEYKISGTIAGTVGDGKYVELDFTGSKFVPTTDDAVMTITGVATSPVAEVTVEVVSVNLGNGSTNTIAMKVTAPGGHSFTKKGEIGKAWSPVLCLNNDLSTQYAGEPFVVGLVESSTVFYTTSVFTELYMGTSLKVIRVPTTQVVVKGLDVESEWTTGWKASTLTLSGLLRPFVYKPKCKNINGPFVNLTGCYGATVFLPEGDNLRNAPSEGAYGYFVNDSASFGSTIYGINCTNARHAYTTSSPRSEPTDDKWWLKGRTLFSEITNGLGTGCHNAFDTHSPSYGIKFTNCRAVGDFRGVDTGGAGFQIRGDRSSLVDCTAINSKIGAAFTAVNISGNSELYISGFTYEGPAGHLALSLSGKAGQVNRVTISDSRWKTLEQYATAITNVEVSASNVEAVVDSATTASAAWRIGEGATLRTRGGAARFSAGSGHSVISLAASGAKVDVGDLEVTGSSFMQYLLATLSQYAGDVYIEADLDGAIPGNPVGGGGTDLKAAVVYTAGNKFRRPLAYRALTIGNANGNTLGLNYSGHDVITWEITATVAGANVNGITPGAFIGQQLNIGSSPASTQQLIINNGTNIAMGHAVTLEAGRGVTLYWNGANWRSGSV</sequence>
<evidence type="ECO:0000250" key="1">
    <source>
        <dbReference type="UniProtKB" id="D1L2X1"/>
    </source>
</evidence>
<evidence type="ECO:0000269" key="2">
    <source>
    </source>
</evidence>
<evidence type="ECO:0000305" key="3"/>
<evidence type="ECO:0000305" key="4">
    <source>
    </source>
</evidence>
<evidence type="ECO:0000312" key="5">
    <source>
        <dbReference type="EMBL" id="APZ82805.1"/>
    </source>
</evidence>
<accession>A0A219YHC2</accession>
<organismHost>
    <name type="scientific">Klebsiella</name>
    <dbReference type="NCBI Taxonomy" id="570"/>
</organismHost>
<comment type="function">
    <text evidence="2 4">Functions as a receptor binding protein (RBP) and probably mediates the attachment to the host capsular exopolysaccharides (Probable). Displays a depolymerase activity that specifically degrades the K5-type polysaccharides of Klebsiella pneumoniae capsule, which allows the phage to reach the host cell membrane and bind the entry receptor (PubMed:28676686).</text>
</comment>
<comment type="subunit">
    <text evidence="1">Homotrimer. Interacts (via N-terminus) with depolymerase 1 (via N-terminus); this interaction probably gives rise to a branched tailspike.</text>
</comment>
<comment type="subcellular location">
    <subcellularLocation>
        <location evidence="1">Virion</location>
    </subcellularLocation>
    <text evidence="1">Tail appendage. Depolymerase 1 is connected to the phage tail via an N-terminal anchor domain, while depolymerase 2 is attached to depolymerase 1.</text>
</comment>
<comment type="similarity">
    <text evidence="3">In the N-terminal section; belongs to the Przondovirus depolymerase 2 family.</text>
</comment>
<keyword id="KW-1238">Degradation of host capsule during virus entry</keyword>
<keyword id="KW-1235">Degradation of host cell envelope components during virus entry</keyword>
<keyword id="KW-0945">Host-virus interaction</keyword>
<keyword id="KW-1185">Reference proteome</keyword>
<keyword id="KW-1233">Viral attachment to host adhesion receptor</keyword>
<keyword id="KW-1161">Viral attachment to host cell</keyword>
<keyword id="KW-1227">Viral tail protein</keyword>
<keyword id="KW-0946">Virion</keyword>
<keyword id="KW-1160">Virus entry into host cell</keyword>
<gene>
    <name evidence="5" type="ORF">k52_038</name>
</gene>
<protein>
    <recommendedName>
        <fullName evidence="3">Depolymerase 2, capsule K5-specific</fullName>
    </recommendedName>
    <alternativeName>
        <fullName evidence="3">Gene product 38</fullName>
        <shortName evidence="3">gp38</shortName>
    </alternativeName>
    <alternativeName>
        <fullName>K5 depolymerase</fullName>
    </alternativeName>
    <alternativeName>
        <fullName evidence="3">Probable tail spike protein</fullName>
    </alternativeName>
</protein>
<name>DPOL2_BPK52</name>
<dbReference type="EMBL" id="KY389315">
    <property type="protein sequence ID" value="APZ82805.1"/>
    <property type="molecule type" value="Genomic_DNA"/>
</dbReference>
<dbReference type="SMR" id="A0A219YHC2"/>
<dbReference type="Proteomes" id="UP000224375">
    <property type="component" value="Genome"/>
</dbReference>
<dbReference type="GO" id="GO:0098015">
    <property type="term" value="C:virus tail"/>
    <property type="evidence" value="ECO:0007669"/>
    <property type="project" value="UniProtKB-KW"/>
</dbReference>
<dbReference type="GO" id="GO:0098671">
    <property type="term" value="P:adhesion receptor-mediated virion attachment to host cell"/>
    <property type="evidence" value="ECO:0007669"/>
    <property type="project" value="UniProtKB-KW"/>
</dbReference>
<dbReference type="GO" id="GO:0098994">
    <property type="term" value="P:symbiont entry into host cell via disruption of host cell envelope"/>
    <property type="evidence" value="ECO:0007669"/>
    <property type="project" value="UniProtKB-KW"/>
</dbReference>
<dbReference type="GO" id="GO:0098996">
    <property type="term" value="P:symbiont entry into host cell via disruption of host cell glycocalyx"/>
    <property type="evidence" value="ECO:0000314"/>
    <property type="project" value="UniProtKB"/>
</dbReference>
<dbReference type="Gene3D" id="2.160.20.10">
    <property type="entry name" value="Single-stranded right-handed beta-helix, Pectin lyase-like"/>
    <property type="match status" value="1"/>
</dbReference>
<dbReference type="InterPro" id="IPR012334">
    <property type="entry name" value="Pectin_lyas_fold"/>
</dbReference>
<organism>
    <name type="scientific">Klebsiella phage K5-2</name>
    <name type="common">Bacteriophage K5-2</name>
    <dbReference type="NCBI Taxonomy" id="1932361"/>
    <lineage>
        <taxon>Viruses</taxon>
        <taxon>Duplodnaviria</taxon>
        <taxon>Heunggongvirae</taxon>
        <taxon>Uroviricota</taxon>
        <taxon>Caudoviricetes</taxon>
        <taxon>Autographiviridae</taxon>
        <taxon>Studiervirinae</taxon>
        <taxon>Przondovirus</taxon>
        <taxon>Przondovirus K52</taxon>
    </lineage>
</organism>